<comment type="function">
    <text evidence="1">Catalyzes the transfer of endogenously produced octanoic acid from octanoyl-acyl-carrier-protein onto the lipoyl domains of lipoate-dependent enzymes. Lipoyl-ACP can also act as a substrate although octanoyl-ACP is likely to be the physiological substrate.</text>
</comment>
<comment type="catalytic activity">
    <reaction evidence="1">
        <text>octanoyl-[ACP] + L-lysyl-[protein] = N(6)-octanoyl-L-lysyl-[protein] + holo-[ACP] + H(+)</text>
        <dbReference type="Rhea" id="RHEA:17665"/>
        <dbReference type="Rhea" id="RHEA-COMP:9636"/>
        <dbReference type="Rhea" id="RHEA-COMP:9685"/>
        <dbReference type="Rhea" id="RHEA-COMP:9752"/>
        <dbReference type="Rhea" id="RHEA-COMP:9928"/>
        <dbReference type="ChEBI" id="CHEBI:15378"/>
        <dbReference type="ChEBI" id="CHEBI:29969"/>
        <dbReference type="ChEBI" id="CHEBI:64479"/>
        <dbReference type="ChEBI" id="CHEBI:78463"/>
        <dbReference type="ChEBI" id="CHEBI:78809"/>
        <dbReference type="EC" id="2.3.1.181"/>
    </reaction>
</comment>
<comment type="pathway">
    <text evidence="1">Protein modification; protein lipoylation via endogenous pathway; protein N(6)-(lipoyl)lysine from octanoyl-[acyl-carrier-protein]: step 1/2.</text>
</comment>
<comment type="subcellular location">
    <subcellularLocation>
        <location evidence="1">Cytoplasm</location>
    </subcellularLocation>
</comment>
<comment type="miscellaneous">
    <text evidence="1">In the reaction, the free carboxyl group of octanoic acid is attached via an amide linkage to the epsilon-amino group of a specific lysine residue of lipoyl domains of lipoate-dependent enzymes.</text>
</comment>
<comment type="similarity">
    <text evidence="1">Belongs to the LipB family.</text>
</comment>
<reference key="1">
    <citation type="journal article" date="2005" name="PLoS Biol.">
        <title>The genome sequence of Rickettsia felis identifies the first putative conjugative plasmid in an obligate intracellular parasite.</title>
        <authorList>
            <person name="Ogata H."/>
            <person name="Renesto P."/>
            <person name="Audic S."/>
            <person name="Robert C."/>
            <person name="Blanc G."/>
            <person name="Fournier P.-E."/>
            <person name="Parinello H."/>
            <person name="Claverie J.-M."/>
            <person name="Raoult D."/>
        </authorList>
    </citation>
    <scope>NUCLEOTIDE SEQUENCE [LARGE SCALE GENOMIC DNA]</scope>
    <source>
        <strain>ATCC VR-1525 / URRWXCal2</strain>
    </source>
</reference>
<gene>
    <name evidence="1" type="primary">lipB</name>
    <name type="ordered locus">RF_1383</name>
</gene>
<keyword id="KW-0012">Acyltransferase</keyword>
<keyword id="KW-0963">Cytoplasm</keyword>
<keyword id="KW-0808">Transferase</keyword>
<dbReference type="EC" id="2.3.1.181" evidence="1"/>
<dbReference type="EMBL" id="CP000053">
    <property type="protein sequence ID" value="AAY62234.1"/>
    <property type="molecule type" value="Genomic_DNA"/>
</dbReference>
<dbReference type="SMR" id="Q4UJQ5"/>
<dbReference type="STRING" id="315456.RF_1383"/>
<dbReference type="KEGG" id="rfe:RF_1383"/>
<dbReference type="eggNOG" id="COG0321">
    <property type="taxonomic scope" value="Bacteria"/>
</dbReference>
<dbReference type="HOGENOM" id="CLU_035168_3_0_5"/>
<dbReference type="OrthoDB" id="9787061at2"/>
<dbReference type="UniPathway" id="UPA00538">
    <property type="reaction ID" value="UER00592"/>
</dbReference>
<dbReference type="Proteomes" id="UP000008548">
    <property type="component" value="Chromosome"/>
</dbReference>
<dbReference type="GO" id="GO:0005737">
    <property type="term" value="C:cytoplasm"/>
    <property type="evidence" value="ECO:0007669"/>
    <property type="project" value="UniProtKB-SubCell"/>
</dbReference>
<dbReference type="GO" id="GO:0033819">
    <property type="term" value="F:lipoyl(octanoyl) transferase activity"/>
    <property type="evidence" value="ECO:0007669"/>
    <property type="project" value="UniProtKB-EC"/>
</dbReference>
<dbReference type="GO" id="GO:0036211">
    <property type="term" value="P:protein modification process"/>
    <property type="evidence" value="ECO:0007669"/>
    <property type="project" value="InterPro"/>
</dbReference>
<dbReference type="CDD" id="cd16444">
    <property type="entry name" value="LipB"/>
    <property type="match status" value="1"/>
</dbReference>
<dbReference type="Gene3D" id="3.30.930.10">
    <property type="entry name" value="Bira Bifunctional Protein, Domain 2"/>
    <property type="match status" value="1"/>
</dbReference>
<dbReference type="HAMAP" id="MF_00013">
    <property type="entry name" value="LipB"/>
    <property type="match status" value="1"/>
</dbReference>
<dbReference type="InterPro" id="IPR045864">
    <property type="entry name" value="aa-tRNA-synth_II/BPL/LPL"/>
</dbReference>
<dbReference type="InterPro" id="IPR004143">
    <property type="entry name" value="BPL_LPL_catalytic"/>
</dbReference>
<dbReference type="InterPro" id="IPR000544">
    <property type="entry name" value="Octanoyltransferase"/>
</dbReference>
<dbReference type="InterPro" id="IPR020605">
    <property type="entry name" value="Octanoyltransferase_CS"/>
</dbReference>
<dbReference type="NCBIfam" id="TIGR00214">
    <property type="entry name" value="lipB"/>
    <property type="match status" value="1"/>
</dbReference>
<dbReference type="NCBIfam" id="NF010921">
    <property type="entry name" value="PRK14341.1"/>
    <property type="match status" value="1"/>
</dbReference>
<dbReference type="NCBIfam" id="NF010925">
    <property type="entry name" value="PRK14345.1"/>
    <property type="match status" value="1"/>
</dbReference>
<dbReference type="PANTHER" id="PTHR10993:SF7">
    <property type="entry name" value="LIPOYLTRANSFERASE 2, MITOCHONDRIAL-RELATED"/>
    <property type="match status" value="1"/>
</dbReference>
<dbReference type="PANTHER" id="PTHR10993">
    <property type="entry name" value="OCTANOYLTRANSFERASE"/>
    <property type="match status" value="1"/>
</dbReference>
<dbReference type="Pfam" id="PF21948">
    <property type="entry name" value="LplA-B_cat"/>
    <property type="match status" value="1"/>
</dbReference>
<dbReference type="PIRSF" id="PIRSF016262">
    <property type="entry name" value="LPLase"/>
    <property type="match status" value="1"/>
</dbReference>
<dbReference type="SUPFAM" id="SSF55681">
    <property type="entry name" value="Class II aaRS and biotin synthetases"/>
    <property type="match status" value="1"/>
</dbReference>
<dbReference type="PROSITE" id="PS51733">
    <property type="entry name" value="BPL_LPL_CATALYTIC"/>
    <property type="match status" value="1"/>
</dbReference>
<dbReference type="PROSITE" id="PS01313">
    <property type="entry name" value="LIPB"/>
    <property type="match status" value="1"/>
</dbReference>
<evidence type="ECO:0000255" key="1">
    <source>
        <dbReference type="HAMAP-Rule" id="MF_00013"/>
    </source>
</evidence>
<evidence type="ECO:0000255" key="2">
    <source>
        <dbReference type="PROSITE-ProRule" id="PRU01067"/>
    </source>
</evidence>
<feature type="chain" id="PRO_0000242760" description="Octanoyltransferase">
    <location>
        <begin position="1"/>
        <end position="209"/>
    </location>
</feature>
<feature type="domain" description="BPL/LPL catalytic" evidence="2">
    <location>
        <begin position="30"/>
        <end position="209"/>
    </location>
</feature>
<feature type="active site" description="Acyl-thioester intermediate" evidence="1">
    <location>
        <position position="174"/>
    </location>
</feature>
<feature type="binding site" evidence="1">
    <location>
        <begin position="69"/>
        <end position="76"/>
    </location>
    <ligand>
        <name>substrate</name>
    </ligand>
</feature>
<feature type="binding site" evidence="1">
    <location>
        <begin position="143"/>
        <end position="145"/>
    </location>
    <ligand>
        <name>substrate</name>
    </ligand>
</feature>
<feature type="binding site" evidence="1">
    <location>
        <begin position="156"/>
        <end position="158"/>
    </location>
    <ligand>
        <name>substrate</name>
    </ligand>
</feature>
<feature type="site" description="Lowers pKa of active site Cys" evidence="1">
    <location>
        <position position="140"/>
    </location>
</feature>
<protein>
    <recommendedName>
        <fullName evidence="1">Octanoyltransferase</fullName>
        <ecNumber evidence="1">2.3.1.181</ecNumber>
    </recommendedName>
    <alternativeName>
        <fullName evidence="1">Lipoate-protein ligase B</fullName>
    </alternativeName>
    <alternativeName>
        <fullName evidence="1">Lipoyl/octanoyl transferase</fullName>
    </alternativeName>
    <alternativeName>
        <fullName evidence="1">Octanoyl-[acyl-carrier-protein]-protein N-octanoyltransferase</fullName>
    </alternativeName>
</protein>
<accession>Q4UJQ5</accession>
<organism>
    <name type="scientific">Rickettsia felis (strain ATCC VR-1525 / URRWXCal2)</name>
    <name type="common">Rickettsia azadi</name>
    <dbReference type="NCBI Taxonomy" id="315456"/>
    <lineage>
        <taxon>Bacteria</taxon>
        <taxon>Pseudomonadati</taxon>
        <taxon>Pseudomonadota</taxon>
        <taxon>Alphaproteobacteria</taxon>
        <taxon>Rickettsiales</taxon>
        <taxon>Rickettsiaceae</taxon>
        <taxon>Rickettsieae</taxon>
        <taxon>Rickettsia</taxon>
        <taxon>spotted fever group</taxon>
    </lineage>
</organism>
<name>LIPB_RICFE</name>
<proteinExistence type="inferred from homology"/>
<sequence length="209" mass="24067">MLQFITIPNLMDYRVTLKLMEDYVNKVISDNEPEIVYLVEHSEVYTAGTNYKQEELLNYGDIPVIYTGRGGKFTFHGPGQRVIYPILNLASPNRHKDLKLYIKMLEEWIINSLNYFGIKTYIIKDKVGIWVKVRKGEFAKIAAIGVRVRKWVTYHGVAINISTDLSKFSGIIPCGLENSLVTSLNQLGIHIEMSEFDKIIQTEFNKIFK</sequence>